<proteinExistence type="evidence at protein level"/>
<gene>
    <name type="primary">Thumpd1</name>
</gene>
<sequence length="350" mass="38885">MATTAQQSPQPVAGKRKGKSQFLPAKRARRGDAGGPRQLEPGLQGILITCNMNERKCVEEAYSLLNEYGDDMYGPEKFIDKDQQPSGSEGEDDDAEAALKKEVGDIKASTEKRLRRFQSVESGANNVVFIRTLGIEPEKLVHHILQDMYKTKKKKTRVILRMLPISGTCKAFLEDMKKYAETFLEPWFKAPNKGTFQIVYKSRNNSHMNREEVIKELAGIVGSLNSENKVDLTNPEYTVVVEIIKAVCCLSVVKDYVLFRKYNLQEVVKSAKDSQPHPKLGNGKEAKLEPDSKLSQSDPPEGNQVAPESIEELGQTEPGSETQAGSEGDAKPEPESQVSEVPKTNENELS</sequence>
<comment type="function">
    <text evidence="1">Functions as a tRNA-binding adapter to mediate NAT10-dependent tRNA acetylation modifying cytidine to N4-acetylcytidine (ac4C).</text>
</comment>
<comment type="subunit">
    <text evidence="1">Interacts with NAT10. Binds tRNA.</text>
</comment>
<comment type="similarity">
    <text evidence="4">Belongs to the THUMPD1 family.</text>
</comment>
<dbReference type="EMBL" id="AK032078">
    <property type="protein sequence ID" value="BAC27685.1"/>
    <property type="molecule type" value="mRNA"/>
</dbReference>
<dbReference type="EMBL" id="AK152912">
    <property type="protein sequence ID" value="BAE31591.1"/>
    <property type="molecule type" value="mRNA"/>
</dbReference>
<dbReference type="EMBL" id="BC004776">
    <property type="protein sequence ID" value="AAH04776.1"/>
    <property type="molecule type" value="mRNA"/>
</dbReference>
<dbReference type="CCDS" id="CCDS21785.1"/>
<dbReference type="RefSeq" id="NP_663560.1">
    <property type="nucleotide sequence ID" value="NM_145585.3"/>
</dbReference>
<dbReference type="RefSeq" id="XP_017177688.1">
    <property type="nucleotide sequence ID" value="XM_017322199.1"/>
</dbReference>
<dbReference type="SMR" id="Q99J36"/>
<dbReference type="BioGRID" id="231447">
    <property type="interactions" value="4"/>
</dbReference>
<dbReference type="FunCoup" id="Q99J36">
    <property type="interactions" value="1299"/>
</dbReference>
<dbReference type="STRING" id="10090.ENSMUSP00000033236"/>
<dbReference type="iPTMnet" id="Q99J36"/>
<dbReference type="PhosphoSitePlus" id="Q99J36"/>
<dbReference type="SwissPalm" id="Q99J36"/>
<dbReference type="jPOST" id="Q99J36"/>
<dbReference type="PaxDb" id="10090-ENSMUSP00000033236"/>
<dbReference type="PeptideAtlas" id="Q99J36"/>
<dbReference type="ProteomicsDB" id="262982"/>
<dbReference type="Pumba" id="Q99J36"/>
<dbReference type="Antibodypedia" id="25603">
    <property type="antibodies" value="131 antibodies from 23 providers"/>
</dbReference>
<dbReference type="DNASU" id="233802"/>
<dbReference type="Ensembl" id="ENSMUST00000033236.9">
    <property type="protein sequence ID" value="ENSMUSP00000033236.7"/>
    <property type="gene ID" value="ENSMUSG00000030942.9"/>
</dbReference>
<dbReference type="GeneID" id="233802"/>
<dbReference type="KEGG" id="mmu:233802"/>
<dbReference type="UCSC" id="uc009jlo.2">
    <property type="organism name" value="mouse"/>
</dbReference>
<dbReference type="AGR" id="MGI:2444479"/>
<dbReference type="CTD" id="55623"/>
<dbReference type="MGI" id="MGI:2444479">
    <property type="gene designation" value="Thumpd1"/>
</dbReference>
<dbReference type="VEuPathDB" id="HostDB:ENSMUSG00000030942"/>
<dbReference type="eggNOG" id="KOG3943">
    <property type="taxonomic scope" value="Eukaryota"/>
</dbReference>
<dbReference type="GeneTree" id="ENSGT00390000002365"/>
<dbReference type="HOGENOM" id="CLU_039352_0_0_1"/>
<dbReference type="InParanoid" id="Q99J36"/>
<dbReference type="OMA" id="MNEKACV"/>
<dbReference type="OrthoDB" id="367221at2759"/>
<dbReference type="PhylomeDB" id="Q99J36"/>
<dbReference type="TreeFam" id="TF313884"/>
<dbReference type="BioGRID-ORCS" id="233802">
    <property type="hits" value="0 hits in 77 CRISPR screens"/>
</dbReference>
<dbReference type="ChiTaRS" id="Thumpd1">
    <property type="organism name" value="mouse"/>
</dbReference>
<dbReference type="PRO" id="PR:Q99J36"/>
<dbReference type="Proteomes" id="UP000000589">
    <property type="component" value="Chromosome 7"/>
</dbReference>
<dbReference type="RNAct" id="Q99J36">
    <property type="molecule type" value="protein"/>
</dbReference>
<dbReference type="Bgee" id="ENSMUSG00000030942">
    <property type="expression patterns" value="Expressed in ileal epithelium and 256 other cell types or tissues"/>
</dbReference>
<dbReference type="GO" id="GO:0003723">
    <property type="term" value="F:RNA binding"/>
    <property type="evidence" value="ECO:0007669"/>
    <property type="project" value="InterPro"/>
</dbReference>
<dbReference type="GO" id="GO:0006400">
    <property type="term" value="P:tRNA modification"/>
    <property type="evidence" value="ECO:0007669"/>
    <property type="project" value="InterPro"/>
</dbReference>
<dbReference type="CDD" id="cd11717">
    <property type="entry name" value="THUMP_THUMPD1_like"/>
    <property type="match status" value="1"/>
</dbReference>
<dbReference type="FunFam" id="3.30.2300.10:FF:000001">
    <property type="entry name" value="THUMP domain-containing protein 1"/>
    <property type="match status" value="1"/>
</dbReference>
<dbReference type="Gene3D" id="3.30.2300.10">
    <property type="entry name" value="THUMP superfamily"/>
    <property type="match status" value="1"/>
</dbReference>
<dbReference type="InterPro" id="IPR004114">
    <property type="entry name" value="THUMP_dom"/>
</dbReference>
<dbReference type="InterPro" id="IPR040183">
    <property type="entry name" value="THUMPD1-like"/>
</dbReference>
<dbReference type="PANTHER" id="PTHR13452">
    <property type="entry name" value="THUMP DOMAIN CONTAINING PROTEIN 1-RELATED"/>
    <property type="match status" value="1"/>
</dbReference>
<dbReference type="PANTHER" id="PTHR13452:SF10">
    <property type="entry name" value="THUMP DOMAIN-CONTAINING PROTEIN 1"/>
    <property type="match status" value="1"/>
</dbReference>
<dbReference type="Pfam" id="PF02926">
    <property type="entry name" value="THUMP"/>
    <property type="match status" value="1"/>
</dbReference>
<dbReference type="SMART" id="SM00981">
    <property type="entry name" value="THUMP"/>
    <property type="match status" value="1"/>
</dbReference>
<dbReference type="SUPFAM" id="SSF143437">
    <property type="entry name" value="THUMP domain-like"/>
    <property type="match status" value="1"/>
</dbReference>
<dbReference type="PROSITE" id="PS51165">
    <property type="entry name" value="THUMP"/>
    <property type="match status" value="1"/>
</dbReference>
<reference key="1">
    <citation type="journal article" date="2005" name="Science">
        <title>The transcriptional landscape of the mammalian genome.</title>
        <authorList>
            <person name="Carninci P."/>
            <person name="Kasukawa T."/>
            <person name="Katayama S."/>
            <person name="Gough J."/>
            <person name="Frith M.C."/>
            <person name="Maeda N."/>
            <person name="Oyama R."/>
            <person name="Ravasi T."/>
            <person name="Lenhard B."/>
            <person name="Wells C."/>
            <person name="Kodzius R."/>
            <person name="Shimokawa K."/>
            <person name="Bajic V.B."/>
            <person name="Brenner S.E."/>
            <person name="Batalov S."/>
            <person name="Forrest A.R."/>
            <person name="Zavolan M."/>
            <person name="Davis M.J."/>
            <person name="Wilming L.G."/>
            <person name="Aidinis V."/>
            <person name="Allen J.E."/>
            <person name="Ambesi-Impiombato A."/>
            <person name="Apweiler R."/>
            <person name="Aturaliya R.N."/>
            <person name="Bailey T.L."/>
            <person name="Bansal M."/>
            <person name="Baxter L."/>
            <person name="Beisel K.W."/>
            <person name="Bersano T."/>
            <person name="Bono H."/>
            <person name="Chalk A.M."/>
            <person name="Chiu K.P."/>
            <person name="Choudhary V."/>
            <person name="Christoffels A."/>
            <person name="Clutterbuck D.R."/>
            <person name="Crowe M.L."/>
            <person name="Dalla E."/>
            <person name="Dalrymple B.P."/>
            <person name="de Bono B."/>
            <person name="Della Gatta G."/>
            <person name="di Bernardo D."/>
            <person name="Down T."/>
            <person name="Engstrom P."/>
            <person name="Fagiolini M."/>
            <person name="Faulkner G."/>
            <person name="Fletcher C.F."/>
            <person name="Fukushima T."/>
            <person name="Furuno M."/>
            <person name="Futaki S."/>
            <person name="Gariboldi M."/>
            <person name="Georgii-Hemming P."/>
            <person name="Gingeras T.R."/>
            <person name="Gojobori T."/>
            <person name="Green R.E."/>
            <person name="Gustincich S."/>
            <person name="Harbers M."/>
            <person name="Hayashi Y."/>
            <person name="Hensch T.K."/>
            <person name="Hirokawa N."/>
            <person name="Hill D."/>
            <person name="Huminiecki L."/>
            <person name="Iacono M."/>
            <person name="Ikeo K."/>
            <person name="Iwama A."/>
            <person name="Ishikawa T."/>
            <person name="Jakt M."/>
            <person name="Kanapin A."/>
            <person name="Katoh M."/>
            <person name="Kawasawa Y."/>
            <person name="Kelso J."/>
            <person name="Kitamura H."/>
            <person name="Kitano H."/>
            <person name="Kollias G."/>
            <person name="Krishnan S.P."/>
            <person name="Kruger A."/>
            <person name="Kummerfeld S.K."/>
            <person name="Kurochkin I.V."/>
            <person name="Lareau L.F."/>
            <person name="Lazarevic D."/>
            <person name="Lipovich L."/>
            <person name="Liu J."/>
            <person name="Liuni S."/>
            <person name="McWilliam S."/>
            <person name="Madan Babu M."/>
            <person name="Madera M."/>
            <person name="Marchionni L."/>
            <person name="Matsuda H."/>
            <person name="Matsuzawa S."/>
            <person name="Miki H."/>
            <person name="Mignone F."/>
            <person name="Miyake S."/>
            <person name="Morris K."/>
            <person name="Mottagui-Tabar S."/>
            <person name="Mulder N."/>
            <person name="Nakano N."/>
            <person name="Nakauchi H."/>
            <person name="Ng P."/>
            <person name="Nilsson R."/>
            <person name="Nishiguchi S."/>
            <person name="Nishikawa S."/>
            <person name="Nori F."/>
            <person name="Ohara O."/>
            <person name="Okazaki Y."/>
            <person name="Orlando V."/>
            <person name="Pang K.C."/>
            <person name="Pavan W.J."/>
            <person name="Pavesi G."/>
            <person name="Pesole G."/>
            <person name="Petrovsky N."/>
            <person name="Piazza S."/>
            <person name="Reed J."/>
            <person name="Reid J.F."/>
            <person name="Ring B.Z."/>
            <person name="Ringwald M."/>
            <person name="Rost B."/>
            <person name="Ruan Y."/>
            <person name="Salzberg S.L."/>
            <person name="Sandelin A."/>
            <person name="Schneider C."/>
            <person name="Schoenbach C."/>
            <person name="Sekiguchi K."/>
            <person name="Semple C.A."/>
            <person name="Seno S."/>
            <person name="Sessa L."/>
            <person name="Sheng Y."/>
            <person name="Shibata Y."/>
            <person name="Shimada H."/>
            <person name="Shimada K."/>
            <person name="Silva D."/>
            <person name="Sinclair B."/>
            <person name="Sperling S."/>
            <person name="Stupka E."/>
            <person name="Sugiura K."/>
            <person name="Sultana R."/>
            <person name="Takenaka Y."/>
            <person name="Taki K."/>
            <person name="Tammoja K."/>
            <person name="Tan S.L."/>
            <person name="Tang S."/>
            <person name="Taylor M.S."/>
            <person name="Tegner J."/>
            <person name="Teichmann S.A."/>
            <person name="Ueda H.R."/>
            <person name="van Nimwegen E."/>
            <person name="Verardo R."/>
            <person name="Wei C.L."/>
            <person name="Yagi K."/>
            <person name="Yamanishi H."/>
            <person name="Zabarovsky E."/>
            <person name="Zhu S."/>
            <person name="Zimmer A."/>
            <person name="Hide W."/>
            <person name="Bult C."/>
            <person name="Grimmond S.M."/>
            <person name="Teasdale R.D."/>
            <person name="Liu E.T."/>
            <person name="Brusic V."/>
            <person name="Quackenbush J."/>
            <person name="Wahlestedt C."/>
            <person name="Mattick J.S."/>
            <person name="Hume D.A."/>
            <person name="Kai C."/>
            <person name="Sasaki D."/>
            <person name="Tomaru Y."/>
            <person name="Fukuda S."/>
            <person name="Kanamori-Katayama M."/>
            <person name="Suzuki M."/>
            <person name="Aoki J."/>
            <person name="Arakawa T."/>
            <person name="Iida J."/>
            <person name="Imamura K."/>
            <person name="Itoh M."/>
            <person name="Kato T."/>
            <person name="Kawaji H."/>
            <person name="Kawagashira N."/>
            <person name="Kawashima T."/>
            <person name="Kojima M."/>
            <person name="Kondo S."/>
            <person name="Konno H."/>
            <person name="Nakano K."/>
            <person name="Ninomiya N."/>
            <person name="Nishio T."/>
            <person name="Okada M."/>
            <person name="Plessy C."/>
            <person name="Shibata K."/>
            <person name="Shiraki T."/>
            <person name="Suzuki S."/>
            <person name="Tagami M."/>
            <person name="Waki K."/>
            <person name="Watahiki A."/>
            <person name="Okamura-Oho Y."/>
            <person name="Suzuki H."/>
            <person name="Kawai J."/>
            <person name="Hayashizaki Y."/>
        </authorList>
    </citation>
    <scope>NUCLEOTIDE SEQUENCE [LARGE SCALE MRNA]</scope>
    <source>
        <strain>C57BL/6J</strain>
        <tissue>Bone marrow</tissue>
        <tissue>Medulla oblongata</tissue>
    </source>
</reference>
<reference key="2">
    <citation type="journal article" date="2004" name="Genome Res.">
        <title>The status, quality, and expansion of the NIH full-length cDNA project: the Mammalian Gene Collection (MGC).</title>
        <authorList>
            <consortium name="The MGC Project Team"/>
        </authorList>
    </citation>
    <scope>NUCLEOTIDE SEQUENCE [LARGE SCALE MRNA]</scope>
    <source>
        <tissue>Mammary tumor</tissue>
    </source>
</reference>
<reference key="3">
    <citation type="journal article" date="2007" name="Proc. Natl. Acad. Sci. U.S.A.">
        <title>Large-scale phosphorylation analysis of mouse liver.</title>
        <authorList>
            <person name="Villen J."/>
            <person name="Beausoleil S.A."/>
            <person name="Gerber S.A."/>
            <person name="Gygi S.P."/>
        </authorList>
    </citation>
    <scope>PHOSPHORYLATION [LARGE SCALE ANALYSIS] AT SER-86</scope>
    <scope>IDENTIFICATION BY MASS SPECTROMETRY [LARGE SCALE ANALYSIS]</scope>
    <source>
        <tissue>Liver</tissue>
    </source>
</reference>
<reference key="4">
    <citation type="journal article" date="2008" name="J. Proteome Res.">
        <title>Specific phosphopeptide enrichment with immobilized titanium ion affinity chromatography adsorbent for phosphoproteome analysis.</title>
        <authorList>
            <person name="Zhou H."/>
            <person name="Ye M."/>
            <person name="Dong J."/>
            <person name="Han G."/>
            <person name="Jiang X."/>
            <person name="Wu R."/>
            <person name="Zou H."/>
        </authorList>
    </citation>
    <scope>IDENTIFICATION BY MASS SPECTROMETRY [LARGE SCALE ANALYSIS]</scope>
    <source>
        <tissue>Liver</tissue>
    </source>
</reference>
<reference key="5">
    <citation type="journal article" date="2009" name="Mol. Cell. Proteomics">
        <title>Large scale localization of protein phosphorylation by use of electron capture dissociation mass spectrometry.</title>
        <authorList>
            <person name="Sweet S.M."/>
            <person name="Bailey C.M."/>
            <person name="Cunningham D.L."/>
            <person name="Heath J.K."/>
            <person name="Cooper H.J."/>
        </authorList>
    </citation>
    <scope>ACETYLATION [LARGE SCALE ANALYSIS] AT ALA-2</scope>
    <scope>PHOSPHORYLATION [LARGE SCALE ANALYSIS] AT SER-8; SER-86 AND SER-88</scope>
    <scope>CLEAVAGE OF INITIATOR METHIONINE [LARGE SCALE ANALYSIS]</scope>
    <scope>IDENTIFICATION BY MASS SPECTROMETRY [LARGE SCALE ANALYSIS]</scope>
    <source>
        <tissue>Embryonic fibroblast</tissue>
    </source>
</reference>
<reference key="6">
    <citation type="journal article" date="2010" name="Cell">
        <title>A tissue-specific atlas of mouse protein phosphorylation and expression.</title>
        <authorList>
            <person name="Huttlin E.L."/>
            <person name="Jedrychowski M.P."/>
            <person name="Elias J.E."/>
            <person name="Goswami T."/>
            <person name="Rad R."/>
            <person name="Beausoleil S.A."/>
            <person name="Villen J."/>
            <person name="Haas W."/>
            <person name="Sowa M.E."/>
            <person name="Gygi S.P."/>
        </authorList>
    </citation>
    <scope>PHOSPHORYLATION [LARGE SCALE ANALYSIS] AT SER-86</scope>
    <scope>IDENTIFICATION BY MASS SPECTROMETRY [LARGE SCALE ANALYSIS]</scope>
    <source>
        <tissue>Brain</tissue>
        <tissue>Brown adipose tissue</tissue>
        <tissue>Heart</tissue>
        <tissue>Kidney</tissue>
        <tissue>Liver</tissue>
        <tissue>Lung</tissue>
        <tissue>Pancreas</tissue>
        <tissue>Spleen</tissue>
        <tissue>Testis</tissue>
    </source>
</reference>
<protein>
    <recommendedName>
        <fullName>THUMP domain-containing protein 1</fullName>
    </recommendedName>
</protein>
<organism>
    <name type="scientific">Mus musculus</name>
    <name type="common">Mouse</name>
    <dbReference type="NCBI Taxonomy" id="10090"/>
    <lineage>
        <taxon>Eukaryota</taxon>
        <taxon>Metazoa</taxon>
        <taxon>Chordata</taxon>
        <taxon>Craniata</taxon>
        <taxon>Vertebrata</taxon>
        <taxon>Euteleostomi</taxon>
        <taxon>Mammalia</taxon>
        <taxon>Eutheria</taxon>
        <taxon>Euarchontoglires</taxon>
        <taxon>Glires</taxon>
        <taxon>Rodentia</taxon>
        <taxon>Myomorpha</taxon>
        <taxon>Muroidea</taxon>
        <taxon>Muridae</taxon>
        <taxon>Murinae</taxon>
        <taxon>Mus</taxon>
        <taxon>Mus</taxon>
    </lineage>
</organism>
<accession>Q99J36</accession>
<accession>Q3U6Y3</accession>
<name>THUM1_MOUSE</name>
<keyword id="KW-0007">Acetylation</keyword>
<keyword id="KW-0597">Phosphoprotein</keyword>
<keyword id="KW-1185">Reference proteome</keyword>
<feature type="initiator methionine" description="Removed" evidence="6">
    <location>
        <position position="1"/>
    </location>
</feature>
<feature type="chain" id="PRO_0000072531" description="THUMP domain-containing protein 1">
    <location>
        <begin position="2"/>
        <end position="350"/>
    </location>
</feature>
<feature type="domain" description="THUMP" evidence="2">
    <location>
        <begin position="147"/>
        <end position="254"/>
    </location>
</feature>
<feature type="region of interest" description="Disordered" evidence="3">
    <location>
        <begin position="1"/>
        <end position="42"/>
    </location>
</feature>
<feature type="region of interest" description="Disordered" evidence="3">
    <location>
        <begin position="75"/>
        <end position="96"/>
    </location>
</feature>
<feature type="region of interest" description="Disordered" evidence="3">
    <location>
        <begin position="270"/>
        <end position="350"/>
    </location>
</feature>
<feature type="compositionally biased region" description="Polar residues" evidence="3">
    <location>
        <begin position="1"/>
        <end position="10"/>
    </location>
</feature>
<feature type="compositionally biased region" description="Basic and acidic residues" evidence="3">
    <location>
        <begin position="270"/>
        <end position="292"/>
    </location>
</feature>
<feature type="modified residue" description="N-acetylalanine" evidence="6">
    <location>
        <position position="2"/>
    </location>
</feature>
<feature type="modified residue" description="Phosphoserine" evidence="6">
    <location>
        <position position="8"/>
    </location>
</feature>
<feature type="modified residue" description="Phosphoserine" evidence="5 6 7">
    <location>
        <position position="86"/>
    </location>
</feature>
<feature type="modified residue" description="Phosphoserine" evidence="6">
    <location>
        <position position="88"/>
    </location>
</feature>
<feature type="modified residue" description="Phosphoserine" evidence="1">
    <location>
        <position position="119"/>
    </location>
</feature>
<feature type="modified residue" description="Phosphoserine" evidence="1">
    <location>
        <position position="270"/>
    </location>
</feature>
<evidence type="ECO:0000250" key="1">
    <source>
        <dbReference type="UniProtKB" id="Q9NXG2"/>
    </source>
</evidence>
<evidence type="ECO:0000255" key="2">
    <source>
        <dbReference type="PROSITE-ProRule" id="PRU00529"/>
    </source>
</evidence>
<evidence type="ECO:0000256" key="3">
    <source>
        <dbReference type="SAM" id="MobiDB-lite"/>
    </source>
</evidence>
<evidence type="ECO:0000305" key="4"/>
<evidence type="ECO:0007744" key="5">
    <source>
    </source>
</evidence>
<evidence type="ECO:0007744" key="6">
    <source>
    </source>
</evidence>
<evidence type="ECO:0007744" key="7">
    <source>
    </source>
</evidence>